<organism>
    <name type="scientific">Californiconus californicus</name>
    <name type="common">California cone</name>
    <name type="synonym">Conus californicus</name>
    <dbReference type="NCBI Taxonomy" id="1736779"/>
    <lineage>
        <taxon>Eukaryota</taxon>
        <taxon>Metazoa</taxon>
        <taxon>Spiralia</taxon>
        <taxon>Lophotrochozoa</taxon>
        <taxon>Mollusca</taxon>
        <taxon>Gastropoda</taxon>
        <taxon>Caenogastropoda</taxon>
        <taxon>Neogastropoda</taxon>
        <taxon>Conoidea</taxon>
        <taxon>Conidae</taxon>
        <taxon>Californiconus</taxon>
    </lineage>
</organism>
<dbReference type="EMBL" id="GU306155">
    <property type="protein sequence ID" value="ADB04234.1"/>
    <property type="molecule type" value="mRNA"/>
</dbReference>
<dbReference type="SMR" id="D2Y491"/>
<dbReference type="ConoServer" id="3965">
    <property type="toxin name" value="Conkunitzin-Cal9.1d precursor"/>
</dbReference>
<dbReference type="GO" id="GO:0005615">
    <property type="term" value="C:extracellular space"/>
    <property type="evidence" value="ECO:0007669"/>
    <property type="project" value="TreeGrafter"/>
</dbReference>
<dbReference type="GO" id="GO:0004867">
    <property type="term" value="F:serine-type endopeptidase inhibitor activity"/>
    <property type="evidence" value="ECO:0007669"/>
    <property type="project" value="UniProtKB-KW"/>
</dbReference>
<dbReference type="GO" id="GO:0090729">
    <property type="term" value="F:toxin activity"/>
    <property type="evidence" value="ECO:0007669"/>
    <property type="project" value="UniProtKB-KW"/>
</dbReference>
<dbReference type="CDD" id="cd00109">
    <property type="entry name" value="Kunitz-type"/>
    <property type="match status" value="1"/>
</dbReference>
<dbReference type="FunFam" id="4.10.410.10:FF:000004">
    <property type="entry name" value="Tissue factor pathway inhibitor"/>
    <property type="match status" value="1"/>
</dbReference>
<dbReference type="Gene3D" id="4.10.410.10">
    <property type="entry name" value="Pancreatic trypsin inhibitor Kunitz domain"/>
    <property type="match status" value="1"/>
</dbReference>
<dbReference type="InterPro" id="IPR002223">
    <property type="entry name" value="Kunitz_BPTI"/>
</dbReference>
<dbReference type="InterPro" id="IPR036880">
    <property type="entry name" value="Kunitz_BPTI_sf"/>
</dbReference>
<dbReference type="InterPro" id="IPR050098">
    <property type="entry name" value="TFPI/VKTCI-like"/>
</dbReference>
<dbReference type="PANTHER" id="PTHR10083:SF374">
    <property type="entry name" value="BPTI_KUNITZ INHIBITOR DOMAIN-CONTAINING PROTEIN"/>
    <property type="match status" value="1"/>
</dbReference>
<dbReference type="PANTHER" id="PTHR10083">
    <property type="entry name" value="KUNITZ-TYPE PROTEASE INHIBITOR-RELATED"/>
    <property type="match status" value="1"/>
</dbReference>
<dbReference type="Pfam" id="PF00014">
    <property type="entry name" value="Kunitz_BPTI"/>
    <property type="match status" value="1"/>
</dbReference>
<dbReference type="PRINTS" id="PR00759">
    <property type="entry name" value="BASICPTASE"/>
</dbReference>
<dbReference type="SMART" id="SM00131">
    <property type="entry name" value="KU"/>
    <property type="match status" value="1"/>
</dbReference>
<dbReference type="SUPFAM" id="SSF57362">
    <property type="entry name" value="BPTI-like"/>
    <property type="match status" value="1"/>
</dbReference>
<dbReference type="PROSITE" id="PS50279">
    <property type="entry name" value="BPTI_KUNITZ_2"/>
    <property type="match status" value="1"/>
</dbReference>
<proteinExistence type="evidence at transcript level"/>
<protein>
    <recommendedName>
        <fullName evidence="3">Kunitz-type serine protease inhibitor conotoxin Cal9.1d</fullName>
    </recommendedName>
    <alternativeName>
        <fullName evidence="4">Conkunitzin-Cal9.1d</fullName>
    </alternativeName>
</protein>
<feature type="propeptide" id="PRO_5000566310" evidence="5">
    <location>
        <begin position="1" status="less than"/>
        <end position="2"/>
    </location>
</feature>
<feature type="peptide" id="PRO_5000566311" description="Kunitz-type serine protease inhibitor conotoxin Cal9.1d" evidence="5">
    <location>
        <begin position="5"/>
        <end position="60"/>
    </location>
</feature>
<feature type="domain" description="BPTI/Kunitz inhibitor" evidence="2">
    <location>
        <begin position="7"/>
        <end position="57"/>
    </location>
</feature>
<feature type="site" description="Reactive bond for chymotrypsin" evidence="1">
    <location>
        <begin position="17"/>
        <end position="18"/>
    </location>
</feature>
<feature type="disulfide bond" evidence="2">
    <location>
        <begin position="7"/>
        <end position="57"/>
    </location>
</feature>
<feature type="disulfide bond" evidence="2">
    <location>
        <begin position="16"/>
        <end position="40"/>
    </location>
</feature>
<feature type="disulfide bond" evidence="2">
    <location>
        <begin position="32"/>
        <end position="53"/>
    </location>
</feature>
<feature type="non-terminal residue">
    <location>
        <position position="1"/>
    </location>
</feature>
<comment type="subcellular location">
    <subcellularLocation>
        <location evidence="5">Secreted</location>
    </subcellularLocation>
</comment>
<comment type="tissue specificity">
    <text evidence="5">Expressed by the venom duct.</text>
</comment>
<comment type="domain">
    <text>The cysteine framework is IX (C-C-C-C-C-C).</text>
</comment>
<comment type="similarity">
    <text evidence="4">Belongs to the venom Kunitz-type family.</text>
</comment>
<name>VKT1D_CONCL</name>
<reference key="1">
    <citation type="journal article" date="2011" name="Toxicon">
        <title>Diversity of conotoxin types from Conus californicus reflects a diversity of prey types and a novel evolutionary history.</title>
        <authorList>
            <person name="Elliger C.A."/>
            <person name="Richmond T.A."/>
            <person name="Lebaric Z.N."/>
            <person name="Pierce N.T."/>
            <person name="Sweedler J.V."/>
            <person name="Gilly W.F."/>
        </authorList>
    </citation>
    <scope>NUCLEOTIDE SEQUENCE [MRNA]</scope>
    <source>
        <tissue>Venom duct</tissue>
    </source>
</reference>
<evidence type="ECO:0000250" key="1"/>
<evidence type="ECO:0000255" key="2">
    <source>
        <dbReference type="PROSITE-ProRule" id="PRU00031"/>
    </source>
</evidence>
<evidence type="ECO:0000303" key="3">
    <source>
    </source>
</evidence>
<evidence type="ECO:0000305" key="4"/>
<evidence type="ECO:0000305" key="5">
    <source>
    </source>
</evidence>
<sequence length="60" mass="6677">RTKRDVCELPFEEGPCFAAIRVYAYNAKTGDCEQLTYGGCEGNGNRFATLEDCDNACARY</sequence>
<keyword id="KW-1015">Disulfide bond</keyword>
<keyword id="KW-0646">Protease inhibitor</keyword>
<keyword id="KW-0964">Secreted</keyword>
<keyword id="KW-0722">Serine protease inhibitor</keyword>
<keyword id="KW-0800">Toxin</keyword>
<accession>D2Y491</accession>